<dbReference type="EMBL" id="AE005176">
    <property type="protein sequence ID" value="AAK04191.1"/>
    <property type="molecule type" value="Genomic_DNA"/>
</dbReference>
<dbReference type="PIR" id="E86636">
    <property type="entry name" value="E86636"/>
</dbReference>
<dbReference type="RefSeq" id="NP_266249.1">
    <property type="nucleotide sequence ID" value="NC_002662.1"/>
</dbReference>
<dbReference type="RefSeq" id="WP_003132258.1">
    <property type="nucleotide sequence ID" value="NC_002662.1"/>
</dbReference>
<dbReference type="SMR" id="P0A489"/>
<dbReference type="PaxDb" id="272623-L0096"/>
<dbReference type="EnsemblBacteria" id="AAK04191">
    <property type="protein sequence ID" value="AAK04191"/>
    <property type="gene ID" value="L0096"/>
</dbReference>
<dbReference type="GeneID" id="89632238"/>
<dbReference type="KEGG" id="lla:L0096"/>
<dbReference type="PATRIC" id="fig|272623.7.peg.107"/>
<dbReference type="eggNOG" id="COG0267">
    <property type="taxonomic scope" value="Bacteria"/>
</dbReference>
<dbReference type="HOGENOM" id="CLU_190949_3_2_9"/>
<dbReference type="OrthoDB" id="197660at2"/>
<dbReference type="Proteomes" id="UP000002196">
    <property type="component" value="Chromosome"/>
</dbReference>
<dbReference type="GO" id="GO:0005737">
    <property type="term" value="C:cytoplasm"/>
    <property type="evidence" value="ECO:0007669"/>
    <property type="project" value="UniProtKB-ARBA"/>
</dbReference>
<dbReference type="GO" id="GO:1990904">
    <property type="term" value="C:ribonucleoprotein complex"/>
    <property type="evidence" value="ECO:0007669"/>
    <property type="project" value="UniProtKB-KW"/>
</dbReference>
<dbReference type="GO" id="GO:0005840">
    <property type="term" value="C:ribosome"/>
    <property type="evidence" value="ECO:0007669"/>
    <property type="project" value="UniProtKB-KW"/>
</dbReference>
<dbReference type="GO" id="GO:0003735">
    <property type="term" value="F:structural constituent of ribosome"/>
    <property type="evidence" value="ECO:0007669"/>
    <property type="project" value="InterPro"/>
</dbReference>
<dbReference type="GO" id="GO:0006412">
    <property type="term" value="P:translation"/>
    <property type="evidence" value="ECO:0007669"/>
    <property type="project" value="UniProtKB-UniRule"/>
</dbReference>
<dbReference type="Gene3D" id="2.20.28.120">
    <property type="entry name" value="Ribosomal protein L33"/>
    <property type="match status" value="1"/>
</dbReference>
<dbReference type="HAMAP" id="MF_00294">
    <property type="entry name" value="Ribosomal_bL33"/>
    <property type="match status" value="1"/>
</dbReference>
<dbReference type="InterPro" id="IPR001705">
    <property type="entry name" value="Ribosomal_bL33"/>
</dbReference>
<dbReference type="InterPro" id="IPR018264">
    <property type="entry name" value="Ribosomal_bL33_CS"/>
</dbReference>
<dbReference type="InterPro" id="IPR038584">
    <property type="entry name" value="Ribosomal_bL33_sf"/>
</dbReference>
<dbReference type="InterPro" id="IPR011332">
    <property type="entry name" value="Ribosomal_zn-bd"/>
</dbReference>
<dbReference type="NCBIfam" id="NF001764">
    <property type="entry name" value="PRK00504.1"/>
    <property type="match status" value="1"/>
</dbReference>
<dbReference type="NCBIfam" id="NF001860">
    <property type="entry name" value="PRK00595.1"/>
    <property type="match status" value="1"/>
</dbReference>
<dbReference type="NCBIfam" id="TIGR01023">
    <property type="entry name" value="rpmG_bact"/>
    <property type="match status" value="1"/>
</dbReference>
<dbReference type="PANTHER" id="PTHR43168">
    <property type="entry name" value="50S RIBOSOMAL PROTEIN L33, CHLOROPLASTIC"/>
    <property type="match status" value="1"/>
</dbReference>
<dbReference type="PANTHER" id="PTHR43168:SF2">
    <property type="entry name" value="LARGE RIBOSOMAL SUBUNIT PROTEIN BL33C"/>
    <property type="match status" value="1"/>
</dbReference>
<dbReference type="Pfam" id="PF00471">
    <property type="entry name" value="Ribosomal_L33"/>
    <property type="match status" value="1"/>
</dbReference>
<dbReference type="SUPFAM" id="SSF57829">
    <property type="entry name" value="Zn-binding ribosomal proteins"/>
    <property type="match status" value="1"/>
</dbReference>
<dbReference type="PROSITE" id="PS00582">
    <property type="entry name" value="RIBOSOMAL_L33"/>
    <property type="match status" value="1"/>
</dbReference>
<keyword id="KW-1185">Reference proteome</keyword>
<keyword id="KW-0687">Ribonucleoprotein</keyword>
<keyword id="KW-0689">Ribosomal protein</keyword>
<comment type="similarity">
    <text evidence="2">Belongs to the bacterial ribosomal protein bL33 family.</text>
</comment>
<sequence>MRVNITLEHKESGERLYLTQKNKRNTPDKLELKKYSKKLRKHVIFKEVK</sequence>
<protein>
    <recommendedName>
        <fullName evidence="1">Large ribosomal subunit protein bL33C</fullName>
    </recommendedName>
    <alternativeName>
        <fullName>50S ribosomal protein L33 3</fullName>
    </alternativeName>
</protein>
<name>RL333_LACLA</name>
<reference key="1">
    <citation type="journal article" date="2001" name="Genome Res.">
        <title>The complete genome sequence of the lactic acid bacterium Lactococcus lactis ssp. lactis IL1403.</title>
        <authorList>
            <person name="Bolotin A."/>
            <person name="Wincker P."/>
            <person name="Mauger S."/>
            <person name="Jaillon O."/>
            <person name="Malarme K."/>
            <person name="Weissenbach J."/>
            <person name="Ehrlich S.D."/>
            <person name="Sorokin A."/>
        </authorList>
    </citation>
    <scope>NUCLEOTIDE SEQUENCE [LARGE SCALE GENOMIC DNA]</scope>
    <source>
        <strain>IL1403</strain>
    </source>
</reference>
<feature type="chain" id="PRO_0000170172" description="Large ribosomal subunit protein bL33C">
    <location>
        <begin position="1"/>
        <end position="49"/>
    </location>
</feature>
<accession>P0A489</accession>
<accession>O34102</accession>
<evidence type="ECO:0000255" key="1">
    <source>
        <dbReference type="HAMAP-Rule" id="MF_00294"/>
    </source>
</evidence>
<evidence type="ECO:0000305" key="2"/>
<gene>
    <name type="primary">rpmG3</name>
    <name type="synonym">rpmG</name>
    <name type="synonym">rpmGB</name>
    <name type="ordered locus">LL0093</name>
    <name type="ORF">L0096</name>
</gene>
<organism>
    <name type="scientific">Lactococcus lactis subsp. lactis (strain IL1403)</name>
    <name type="common">Streptococcus lactis</name>
    <dbReference type="NCBI Taxonomy" id="272623"/>
    <lineage>
        <taxon>Bacteria</taxon>
        <taxon>Bacillati</taxon>
        <taxon>Bacillota</taxon>
        <taxon>Bacilli</taxon>
        <taxon>Lactobacillales</taxon>
        <taxon>Streptococcaceae</taxon>
        <taxon>Lactococcus</taxon>
    </lineage>
</organism>
<proteinExistence type="inferred from homology"/>